<gene>
    <name evidence="1" type="primary">proA</name>
    <name type="ordered locus">Syncc9902_0927</name>
</gene>
<organism>
    <name type="scientific">Synechococcus sp. (strain CC9902)</name>
    <dbReference type="NCBI Taxonomy" id="316279"/>
    <lineage>
        <taxon>Bacteria</taxon>
        <taxon>Bacillati</taxon>
        <taxon>Cyanobacteriota</taxon>
        <taxon>Cyanophyceae</taxon>
        <taxon>Synechococcales</taxon>
        <taxon>Synechococcaceae</taxon>
        <taxon>Synechococcus</taxon>
    </lineage>
</organism>
<accession>Q3AYD4</accession>
<dbReference type="EC" id="1.2.1.41" evidence="1"/>
<dbReference type="EMBL" id="CP000097">
    <property type="protein sequence ID" value="ABB25893.1"/>
    <property type="status" value="ALT_INIT"/>
    <property type="molecule type" value="Genomic_DNA"/>
</dbReference>
<dbReference type="RefSeq" id="WP_198001753.1">
    <property type="nucleotide sequence ID" value="NC_007513.1"/>
</dbReference>
<dbReference type="SMR" id="Q3AYD4"/>
<dbReference type="STRING" id="316279.Syncc9902_0927"/>
<dbReference type="KEGG" id="sye:Syncc9902_0927"/>
<dbReference type="eggNOG" id="COG0014">
    <property type="taxonomic scope" value="Bacteria"/>
</dbReference>
<dbReference type="HOGENOM" id="CLU_030231_0_1_3"/>
<dbReference type="UniPathway" id="UPA00098">
    <property type="reaction ID" value="UER00360"/>
</dbReference>
<dbReference type="Proteomes" id="UP000002712">
    <property type="component" value="Chromosome"/>
</dbReference>
<dbReference type="GO" id="GO:0005737">
    <property type="term" value="C:cytoplasm"/>
    <property type="evidence" value="ECO:0007669"/>
    <property type="project" value="UniProtKB-SubCell"/>
</dbReference>
<dbReference type="GO" id="GO:0004350">
    <property type="term" value="F:glutamate-5-semialdehyde dehydrogenase activity"/>
    <property type="evidence" value="ECO:0007669"/>
    <property type="project" value="UniProtKB-UniRule"/>
</dbReference>
<dbReference type="GO" id="GO:0050661">
    <property type="term" value="F:NADP binding"/>
    <property type="evidence" value="ECO:0007669"/>
    <property type="project" value="InterPro"/>
</dbReference>
<dbReference type="GO" id="GO:0055129">
    <property type="term" value="P:L-proline biosynthetic process"/>
    <property type="evidence" value="ECO:0007669"/>
    <property type="project" value="UniProtKB-UniRule"/>
</dbReference>
<dbReference type="CDD" id="cd07079">
    <property type="entry name" value="ALDH_F18-19_ProA-GPR"/>
    <property type="match status" value="1"/>
</dbReference>
<dbReference type="FunFam" id="3.40.309.10:FF:000006">
    <property type="entry name" value="Gamma-glutamyl phosphate reductase"/>
    <property type="match status" value="1"/>
</dbReference>
<dbReference type="Gene3D" id="3.40.605.10">
    <property type="entry name" value="Aldehyde Dehydrogenase, Chain A, domain 1"/>
    <property type="match status" value="1"/>
</dbReference>
<dbReference type="Gene3D" id="3.40.309.10">
    <property type="entry name" value="Aldehyde Dehydrogenase, Chain A, domain 2"/>
    <property type="match status" value="1"/>
</dbReference>
<dbReference type="HAMAP" id="MF_00412">
    <property type="entry name" value="ProA"/>
    <property type="match status" value="1"/>
</dbReference>
<dbReference type="InterPro" id="IPR016161">
    <property type="entry name" value="Ald_DH/histidinol_DH"/>
</dbReference>
<dbReference type="InterPro" id="IPR016163">
    <property type="entry name" value="Ald_DH_C"/>
</dbReference>
<dbReference type="InterPro" id="IPR016162">
    <property type="entry name" value="Ald_DH_N"/>
</dbReference>
<dbReference type="InterPro" id="IPR015590">
    <property type="entry name" value="Aldehyde_DH_dom"/>
</dbReference>
<dbReference type="InterPro" id="IPR020593">
    <property type="entry name" value="G-glutamylP_reductase_CS"/>
</dbReference>
<dbReference type="InterPro" id="IPR012134">
    <property type="entry name" value="Glu-5-SA_DH"/>
</dbReference>
<dbReference type="InterPro" id="IPR000965">
    <property type="entry name" value="GPR_dom"/>
</dbReference>
<dbReference type="NCBIfam" id="NF001221">
    <property type="entry name" value="PRK00197.1"/>
    <property type="match status" value="1"/>
</dbReference>
<dbReference type="NCBIfam" id="TIGR00407">
    <property type="entry name" value="proA"/>
    <property type="match status" value="1"/>
</dbReference>
<dbReference type="PANTHER" id="PTHR11063:SF8">
    <property type="entry name" value="DELTA-1-PYRROLINE-5-CARBOXYLATE SYNTHASE"/>
    <property type="match status" value="1"/>
</dbReference>
<dbReference type="PANTHER" id="PTHR11063">
    <property type="entry name" value="GLUTAMATE SEMIALDEHYDE DEHYDROGENASE"/>
    <property type="match status" value="1"/>
</dbReference>
<dbReference type="Pfam" id="PF00171">
    <property type="entry name" value="Aldedh"/>
    <property type="match status" value="1"/>
</dbReference>
<dbReference type="PIRSF" id="PIRSF000151">
    <property type="entry name" value="GPR"/>
    <property type="match status" value="1"/>
</dbReference>
<dbReference type="SUPFAM" id="SSF53720">
    <property type="entry name" value="ALDH-like"/>
    <property type="match status" value="1"/>
</dbReference>
<dbReference type="PROSITE" id="PS01223">
    <property type="entry name" value="PROA"/>
    <property type="match status" value="1"/>
</dbReference>
<proteinExistence type="inferred from homology"/>
<evidence type="ECO:0000255" key="1">
    <source>
        <dbReference type="HAMAP-Rule" id="MF_00412"/>
    </source>
</evidence>
<evidence type="ECO:0000305" key="2"/>
<keyword id="KW-0028">Amino-acid biosynthesis</keyword>
<keyword id="KW-0963">Cytoplasm</keyword>
<keyword id="KW-0521">NADP</keyword>
<keyword id="KW-0560">Oxidoreductase</keyword>
<keyword id="KW-0641">Proline biosynthesis</keyword>
<keyword id="KW-1185">Reference proteome</keyword>
<protein>
    <recommendedName>
        <fullName evidence="1">Gamma-glutamyl phosphate reductase</fullName>
        <shortName evidence="1">GPR</shortName>
        <ecNumber evidence="1">1.2.1.41</ecNumber>
    </recommendedName>
    <alternativeName>
        <fullName evidence="1">Glutamate-5-semialdehyde dehydrogenase</fullName>
    </alternativeName>
    <alternativeName>
        <fullName evidence="1">Glutamyl-gamma-semialdehyde dehydrogenase</fullName>
        <shortName evidence="1">GSA dehydrogenase</shortName>
    </alternativeName>
</protein>
<feature type="chain" id="PRO_0000252599" description="Gamma-glutamyl phosphate reductase">
    <location>
        <begin position="1"/>
        <end position="437"/>
    </location>
</feature>
<reference key="1">
    <citation type="submission" date="2005-08" db="EMBL/GenBank/DDBJ databases">
        <title>Complete sequence of Synechococcus sp. CC9902.</title>
        <authorList>
            <person name="Copeland A."/>
            <person name="Lucas S."/>
            <person name="Lapidus A."/>
            <person name="Barry K."/>
            <person name="Detter J.C."/>
            <person name="Glavina T."/>
            <person name="Hammon N."/>
            <person name="Israni S."/>
            <person name="Pitluck S."/>
            <person name="Martinez M."/>
            <person name="Schmutz J."/>
            <person name="Larimer F."/>
            <person name="Land M."/>
            <person name="Kyrpides N."/>
            <person name="Ivanova N."/>
            <person name="Richardson P."/>
        </authorList>
    </citation>
    <scope>NUCLEOTIDE SEQUENCE [LARGE SCALE GENOMIC DNA]</scope>
    <source>
        <strain>CC9902</strain>
    </source>
</reference>
<name>PROA_SYNS9</name>
<comment type="function">
    <text evidence="1">Catalyzes the NADPH-dependent reduction of L-glutamate 5-phosphate into L-glutamate 5-semialdehyde and phosphate. The product spontaneously undergoes cyclization to form 1-pyrroline-5-carboxylate.</text>
</comment>
<comment type="catalytic activity">
    <reaction evidence="1">
        <text>L-glutamate 5-semialdehyde + phosphate + NADP(+) = L-glutamyl 5-phosphate + NADPH + H(+)</text>
        <dbReference type="Rhea" id="RHEA:19541"/>
        <dbReference type="ChEBI" id="CHEBI:15378"/>
        <dbReference type="ChEBI" id="CHEBI:43474"/>
        <dbReference type="ChEBI" id="CHEBI:57783"/>
        <dbReference type="ChEBI" id="CHEBI:58066"/>
        <dbReference type="ChEBI" id="CHEBI:58274"/>
        <dbReference type="ChEBI" id="CHEBI:58349"/>
        <dbReference type="EC" id="1.2.1.41"/>
    </reaction>
</comment>
<comment type="pathway">
    <text evidence="1">Amino-acid biosynthesis; L-proline biosynthesis; L-glutamate 5-semialdehyde from L-glutamate: step 2/2.</text>
</comment>
<comment type="subcellular location">
    <subcellularLocation>
        <location evidence="1">Cytoplasm</location>
    </subcellularLocation>
</comment>
<comment type="similarity">
    <text evidence="1">Belongs to the gamma-glutamyl phosphate reductase family.</text>
</comment>
<comment type="sequence caution" evidence="2">
    <conflict type="erroneous initiation">
        <sequence resource="EMBL-CDS" id="ABB25893"/>
    </conflict>
</comment>
<sequence>MNTVPEPSAELLARAGAVRLAAVELGQTNNGQRSRALHAMADALQERSSLIVAANVQDLERSEAEGLASALMARLKLDATKLQAAIDGVRKVASLPDPLGLRQLHRELDTDLVLERITVPLGVVGVIFEARPDAVVQIASLAIRSGNGALLKGGSEARCTNEAVMDALRAGLAREESDVSPDALALLTTREESLGLLRLDGLVDLIIPRGSNELVRFIQDNTRIPVLGHADGVCHLYVDAAADVMKATRVAVDSKTQYPAACNAIETLLVHRSIATAFLAAAVPAFQAAGVTLRGDAESQSLGVNESAQEEDWSTEYLDLTLSVRVVDDLACATEHIRRYGSRHTEVILTEDLATADRFLAAVDSAGVYHNCSSRFADGFRYGFGAEVGISTQTLPPRGPVGLEGLVTYRYRLRGNGHIAADYAAGRRSFTHQDLPL</sequence>